<evidence type="ECO:0000250" key="1"/>
<evidence type="ECO:0000305" key="2"/>
<organism>
    <name type="scientific">Xenopus laevis</name>
    <name type="common">African clawed frog</name>
    <dbReference type="NCBI Taxonomy" id="8355"/>
    <lineage>
        <taxon>Eukaryota</taxon>
        <taxon>Metazoa</taxon>
        <taxon>Chordata</taxon>
        <taxon>Craniata</taxon>
        <taxon>Vertebrata</taxon>
        <taxon>Euteleostomi</taxon>
        <taxon>Amphibia</taxon>
        <taxon>Batrachia</taxon>
        <taxon>Anura</taxon>
        <taxon>Pipoidea</taxon>
        <taxon>Pipidae</taxon>
        <taxon>Xenopodinae</taxon>
        <taxon>Xenopus</taxon>
        <taxon>Xenopus</taxon>
    </lineage>
</organism>
<comment type="function">
    <text evidence="1">May be required for assembly of mitochondrial respiratory chain complexes.</text>
</comment>
<comment type="subcellular location">
    <subcellularLocation>
        <location evidence="1">Mitochondrion intermembrane space</location>
    </subcellularLocation>
</comment>
<comment type="similarity">
    <text evidence="2">Belongs to the hcp beta-lactamase family.</text>
</comment>
<protein>
    <recommendedName>
        <fullName>Cytochrome c oxidase assembly factor 7A</fullName>
    </recommendedName>
    <alternativeName>
        <fullName>Beta-lactamase hcp-like protein</fullName>
    </alternativeName>
    <alternativeName>
        <fullName>Sel1 repeat-containing protein 1A</fullName>
    </alternativeName>
</protein>
<feature type="chain" id="PRO_0000282367" description="Cytochrome c oxidase assembly factor 7A">
    <location>
        <begin position="1"/>
        <end position="231"/>
    </location>
</feature>
<feature type="repeat" description="Sel1-like 1">
    <location>
        <begin position="34"/>
        <end position="66"/>
    </location>
</feature>
<feature type="repeat" description="Sel1-like 2">
    <location>
        <begin position="68"/>
        <end position="104"/>
    </location>
</feature>
<feature type="repeat" description="Sel1-like 3">
    <location>
        <begin position="108"/>
        <end position="145"/>
    </location>
</feature>
<feature type="repeat" description="Sel1-like 4">
    <location>
        <begin position="146"/>
        <end position="182"/>
    </location>
</feature>
<feature type="repeat" description="Sel1-like 5">
    <location>
        <begin position="183"/>
        <end position="218"/>
    </location>
</feature>
<dbReference type="EMBL" id="BC078519">
    <property type="protein sequence ID" value="AAH78519.1"/>
    <property type="molecule type" value="mRNA"/>
</dbReference>
<dbReference type="RefSeq" id="NP_001087293.1">
    <property type="nucleotide sequence ID" value="NM_001093824.2"/>
</dbReference>
<dbReference type="SMR" id="Q66KY0"/>
<dbReference type="DNASU" id="447115"/>
<dbReference type="GeneID" id="447115"/>
<dbReference type="KEGG" id="xla:447115"/>
<dbReference type="AGR" id="Xenbase:XB-GENE-6254347"/>
<dbReference type="CTD" id="447115"/>
<dbReference type="Xenbase" id="XB-GENE-6254347">
    <property type="gene designation" value="coa7.L"/>
</dbReference>
<dbReference type="OrthoDB" id="272077at2759"/>
<dbReference type="Proteomes" id="UP000186698">
    <property type="component" value="Chromosome 4L"/>
</dbReference>
<dbReference type="Bgee" id="447115">
    <property type="expression patterns" value="Expressed in oocyte and 19 other cell types or tissues"/>
</dbReference>
<dbReference type="GO" id="GO:0005758">
    <property type="term" value="C:mitochondrial intermembrane space"/>
    <property type="evidence" value="ECO:0000318"/>
    <property type="project" value="GO_Central"/>
</dbReference>
<dbReference type="Gene3D" id="1.25.40.10">
    <property type="entry name" value="Tetratricopeptide repeat domain"/>
    <property type="match status" value="1"/>
</dbReference>
<dbReference type="InterPro" id="IPR040239">
    <property type="entry name" value="HcpB-like"/>
</dbReference>
<dbReference type="InterPro" id="IPR006597">
    <property type="entry name" value="Sel1-like"/>
</dbReference>
<dbReference type="InterPro" id="IPR011990">
    <property type="entry name" value="TPR-like_helical_dom_sf"/>
</dbReference>
<dbReference type="PANTHER" id="PTHR13891">
    <property type="entry name" value="CYTOCHROME C OXIDASE ASSEMBLY FACTOR 7"/>
    <property type="match status" value="1"/>
</dbReference>
<dbReference type="PANTHER" id="PTHR13891:SF1">
    <property type="entry name" value="CYTOCHROME C OXIDASE ASSEMBLY FACTOR 7"/>
    <property type="match status" value="1"/>
</dbReference>
<dbReference type="Pfam" id="PF08238">
    <property type="entry name" value="Sel1"/>
    <property type="match status" value="4"/>
</dbReference>
<dbReference type="SMART" id="SM00671">
    <property type="entry name" value="SEL1"/>
    <property type="match status" value="5"/>
</dbReference>
<dbReference type="SUPFAM" id="SSF81901">
    <property type="entry name" value="HCP-like"/>
    <property type="match status" value="1"/>
</dbReference>
<gene>
    <name type="primary">coa7-a</name>
    <name type="synonym">selrc1-a</name>
</gene>
<reference key="1">
    <citation type="submission" date="2004-07" db="EMBL/GenBank/DDBJ databases">
        <authorList>
            <consortium name="NIH - Xenopus Gene Collection (XGC) project"/>
        </authorList>
    </citation>
    <scope>NUCLEOTIDE SEQUENCE [LARGE SCALE MRNA]</scope>
</reference>
<proteinExistence type="evidence at transcript level"/>
<accession>Q66KY0</accession>
<name>COA7A_XENLA</name>
<sequence length="231" mass="25608">MAGLVDFKNEEEVKDYLDNLGTEYSYQCFKEKQPDGCNRLAEYFENIKKNFESAAGILKINCDQNEHSESFYKLGAYYVTGKGGLPVDLKAAYSCFLKSCNKGGKKSIDSCHNVGLLAHDGRVNDEKADAVTARDYYNKACDGNFAASCFNLSATYLQGAPGIPKDMNKALHFSEKACSLGHVWGCANASRMYKLGDGVAKNDEKAESLKNRARDLHKMQQERTPQISFGE</sequence>
<keyword id="KW-0496">Mitochondrion</keyword>
<keyword id="KW-1185">Reference proteome</keyword>
<keyword id="KW-0677">Repeat</keyword>